<dbReference type="EC" id="3.5.4.13" evidence="1"/>
<dbReference type="EMBL" id="AL954747">
    <property type="protein sequence ID" value="CAD84534.1"/>
    <property type="molecule type" value="Genomic_DNA"/>
</dbReference>
<dbReference type="RefSeq" id="WP_011111249.1">
    <property type="nucleotide sequence ID" value="NC_004757.1"/>
</dbReference>
<dbReference type="SMR" id="Q820Q1"/>
<dbReference type="STRING" id="228410.NE0623"/>
<dbReference type="GeneID" id="87103822"/>
<dbReference type="KEGG" id="neu:NE0623"/>
<dbReference type="eggNOG" id="COG0717">
    <property type="taxonomic scope" value="Bacteria"/>
</dbReference>
<dbReference type="HOGENOM" id="CLU_087476_4_0_4"/>
<dbReference type="OrthoDB" id="9780956at2"/>
<dbReference type="PhylomeDB" id="Q820Q1"/>
<dbReference type="UniPathway" id="UPA00610">
    <property type="reaction ID" value="UER00665"/>
</dbReference>
<dbReference type="Proteomes" id="UP000001416">
    <property type="component" value="Chromosome"/>
</dbReference>
<dbReference type="GO" id="GO:0008829">
    <property type="term" value="F:dCTP deaminase activity"/>
    <property type="evidence" value="ECO:0007669"/>
    <property type="project" value="UniProtKB-UniRule"/>
</dbReference>
<dbReference type="GO" id="GO:0000166">
    <property type="term" value="F:nucleotide binding"/>
    <property type="evidence" value="ECO:0007669"/>
    <property type="project" value="UniProtKB-KW"/>
</dbReference>
<dbReference type="GO" id="GO:0006226">
    <property type="term" value="P:dUMP biosynthetic process"/>
    <property type="evidence" value="ECO:0007669"/>
    <property type="project" value="UniProtKB-UniPathway"/>
</dbReference>
<dbReference type="GO" id="GO:0006229">
    <property type="term" value="P:dUTP biosynthetic process"/>
    <property type="evidence" value="ECO:0007669"/>
    <property type="project" value="UniProtKB-UniRule"/>
</dbReference>
<dbReference type="GO" id="GO:0015949">
    <property type="term" value="P:nucleobase-containing small molecule interconversion"/>
    <property type="evidence" value="ECO:0007669"/>
    <property type="project" value="TreeGrafter"/>
</dbReference>
<dbReference type="CDD" id="cd07557">
    <property type="entry name" value="trimeric_dUTPase"/>
    <property type="match status" value="1"/>
</dbReference>
<dbReference type="FunFam" id="2.70.40.10:FF:000001">
    <property type="entry name" value="dCTP deaminase"/>
    <property type="match status" value="1"/>
</dbReference>
<dbReference type="Gene3D" id="2.70.40.10">
    <property type="match status" value="1"/>
</dbReference>
<dbReference type="HAMAP" id="MF_00146">
    <property type="entry name" value="dCTP_deaminase"/>
    <property type="match status" value="1"/>
</dbReference>
<dbReference type="InterPro" id="IPR011962">
    <property type="entry name" value="dCTP_deaminase"/>
</dbReference>
<dbReference type="InterPro" id="IPR036157">
    <property type="entry name" value="dUTPase-like_sf"/>
</dbReference>
<dbReference type="InterPro" id="IPR033704">
    <property type="entry name" value="dUTPase_trimeric"/>
</dbReference>
<dbReference type="NCBIfam" id="TIGR02274">
    <property type="entry name" value="dCTP_deam"/>
    <property type="match status" value="1"/>
</dbReference>
<dbReference type="PANTHER" id="PTHR42680">
    <property type="entry name" value="DCTP DEAMINASE"/>
    <property type="match status" value="1"/>
</dbReference>
<dbReference type="PANTHER" id="PTHR42680:SF3">
    <property type="entry name" value="DCTP DEAMINASE"/>
    <property type="match status" value="1"/>
</dbReference>
<dbReference type="Pfam" id="PF22769">
    <property type="entry name" value="DCD"/>
    <property type="match status" value="1"/>
</dbReference>
<dbReference type="SUPFAM" id="SSF51283">
    <property type="entry name" value="dUTPase-like"/>
    <property type="match status" value="1"/>
</dbReference>
<organism>
    <name type="scientific">Nitrosomonas europaea (strain ATCC 19718 / CIP 103999 / KCTC 2705 / NBRC 14298)</name>
    <dbReference type="NCBI Taxonomy" id="228410"/>
    <lineage>
        <taxon>Bacteria</taxon>
        <taxon>Pseudomonadati</taxon>
        <taxon>Pseudomonadota</taxon>
        <taxon>Betaproteobacteria</taxon>
        <taxon>Nitrosomonadales</taxon>
        <taxon>Nitrosomonadaceae</taxon>
        <taxon>Nitrosomonas</taxon>
    </lineage>
</organism>
<reference key="1">
    <citation type="journal article" date="2003" name="J. Bacteriol.">
        <title>Complete genome sequence of the ammonia-oxidizing bacterium and obligate chemolithoautotroph Nitrosomonas europaea.</title>
        <authorList>
            <person name="Chain P."/>
            <person name="Lamerdin J.E."/>
            <person name="Larimer F.W."/>
            <person name="Regala W."/>
            <person name="Lao V."/>
            <person name="Land M.L."/>
            <person name="Hauser L."/>
            <person name="Hooper A.B."/>
            <person name="Klotz M.G."/>
            <person name="Norton J."/>
            <person name="Sayavedra-Soto L.A."/>
            <person name="Arciero D.M."/>
            <person name="Hommes N.G."/>
            <person name="Whittaker M.M."/>
            <person name="Arp D.J."/>
        </authorList>
    </citation>
    <scope>NUCLEOTIDE SEQUENCE [LARGE SCALE GENOMIC DNA]</scope>
    <source>
        <strain>ATCC 19718 / CIP 103999 / KCTC 2705 / NBRC 14298</strain>
    </source>
</reference>
<protein>
    <recommendedName>
        <fullName evidence="1">dCTP deaminase</fullName>
        <ecNumber evidence="1">3.5.4.13</ecNumber>
    </recommendedName>
    <alternativeName>
        <fullName evidence="1">Deoxycytidine triphosphate deaminase</fullName>
    </alternativeName>
</protein>
<gene>
    <name evidence="1" type="primary">dcd</name>
    <name type="ordered locus">NE0623</name>
</gene>
<accession>Q820Q1</accession>
<proteinExistence type="inferred from homology"/>
<comment type="function">
    <text evidence="1">Catalyzes the deamination of dCTP to dUTP.</text>
</comment>
<comment type="catalytic activity">
    <reaction evidence="1">
        <text>dCTP + H2O + H(+) = dUTP + NH4(+)</text>
        <dbReference type="Rhea" id="RHEA:22680"/>
        <dbReference type="ChEBI" id="CHEBI:15377"/>
        <dbReference type="ChEBI" id="CHEBI:15378"/>
        <dbReference type="ChEBI" id="CHEBI:28938"/>
        <dbReference type="ChEBI" id="CHEBI:61481"/>
        <dbReference type="ChEBI" id="CHEBI:61555"/>
        <dbReference type="EC" id="3.5.4.13"/>
    </reaction>
</comment>
<comment type="pathway">
    <text evidence="1">Pyrimidine metabolism; dUMP biosynthesis; dUMP from dCTP (dUTP route): step 1/2.</text>
</comment>
<comment type="subunit">
    <text evidence="1">Homotrimer.</text>
</comment>
<comment type="similarity">
    <text evidence="1">Belongs to the dCTP deaminase family.</text>
</comment>
<keyword id="KW-0378">Hydrolase</keyword>
<keyword id="KW-0546">Nucleotide metabolism</keyword>
<keyword id="KW-0547">Nucleotide-binding</keyword>
<keyword id="KW-1185">Reference proteome</keyword>
<name>DCD_NITEU</name>
<feature type="chain" id="PRO_0000156000" description="dCTP deaminase">
    <location>
        <begin position="1"/>
        <end position="188"/>
    </location>
</feature>
<feature type="active site" description="Proton donor/acceptor" evidence="1">
    <location>
        <position position="137"/>
    </location>
</feature>
<feature type="binding site" evidence="1">
    <location>
        <begin position="111"/>
        <end position="116"/>
    </location>
    <ligand>
        <name>dCTP</name>
        <dbReference type="ChEBI" id="CHEBI:61481"/>
    </ligand>
</feature>
<feature type="binding site" evidence="1">
    <location>
        <begin position="135"/>
        <end position="137"/>
    </location>
    <ligand>
        <name>dCTP</name>
        <dbReference type="ChEBI" id="CHEBI:61481"/>
    </ligand>
</feature>
<feature type="binding site" evidence="1">
    <location>
        <position position="156"/>
    </location>
    <ligand>
        <name>dCTP</name>
        <dbReference type="ChEBI" id="CHEBI:61481"/>
    </ligand>
</feature>
<feature type="binding site" evidence="1">
    <location>
        <position position="170"/>
    </location>
    <ligand>
        <name>dCTP</name>
        <dbReference type="ChEBI" id="CHEBI:61481"/>
    </ligand>
</feature>
<feature type="binding site" evidence="1">
    <location>
        <position position="180"/>
    </location>
    <ligand>
        <name>dCTP</name>
        <dbReference type="ChEBI" id="CHEBI:61481"/>
    </ligand>
</feature>
<evidence type="ECO:0000255" key="1">
    <source>
        <dbReference type="HAMAP-Rule" id="MF_00146"/>
    </source>
</evidence>
<sequence>MSIKSDKWIRRMAAEYNMIEPFEPNQIKQRNGESIVSYGTSSYGYDIRCSDEFKLFTNLNSTIVDPKRFDSNSFVDVKGDICIIPPNSFALARTVEYFRIPRNVLTICLGKSTYARCGIIVNVTPFEPEWEGYVTLEFSNTTPLPAKIYANEGVAQVIFFESDEVCETSYKDRNGKYQFQQGVTLPKI</sequence>